<accession>Q2FVS6</accession>
<dbReference type="EMBL" id="CP000253">
    <property type="protein sequence ID" value="ABD31625.1"/>
    <property type="molecule type" value="Genomic_DNA"/>
</dbReference>
<dbReference type="RefSeq" id="WP_000966695.1">
    <property type="nucleotide sequence ID" value="NZ_LS483365.1"/>
</dbReference>
<dbReference type="RefSeq" id="YP_501077.1">
    <property type="nucleotide sequence ID" value="NC_007795.1"/>
</dbReference>
<dbReference type="SMR" id="Q2FVS6"/>
<dbReference type="STRING" id="93061.SAOUHSC_02615"/>
<dbReference type="PaxDb" id="1280-SAXN108_2590"/>
<dbReference type="GeneID" id="3921393"/>
<dbReference type="KEGG" id="sao:SAOUHSC_02615"/>
<dbReference type="PATRIC" id="fig|93061.5.peg.2364"/>
<dbReference type="eggNOG" id="COG1742">
    <property type="taxonomic scope" value="Bacteria"/>
</dbReference>
<dbReference type="HOGENOM" id="CLU_117653_0_1_9"/>
<dbReference type="OrthoDB" id="123240at2"/>
<dbReference type="PRO" id="PR:Q2FVS6"/>
<dbReference type="Proteomes" id="UP000008816">
    <property type="component" value="Chromosome"/>
</dbReference>
<dbReference type="GO" id="GO:0005886">
    <property type="term" value="C:plasma membrane"/>
    <property type="evidence" value="ECO:0000318"/>
    <property type="project" value="GO_Central"/>
</dbReference>
<dbReference type="HAMAP" id="MF_00010">
    <property type="entry name" value="UPF0060"/>
    <property type="match status" value="1"/>
</dbReference>
<dbReference type="InterPro" id="IPR003844">
    <property type="entry name" value="UPF0060"/>
</dbReference>
<dbReference type="NCBIfam" id="NF002586">
    <property type="entry name" value="PRK02237.1"/>
    <property type="match status" value="1"/>
</dbReference>
<dbReference type="PANTHER" id="PTHR36116">
    <property type="entry name" value="UPF0060 MEMBRANE PROTEIN YNFA"/>
    <property type="match status" value="1"/>
</dbReference>
<dbReference type="PANTHER" id="PTHR36116:SF1">
    <property type="entry name" value="UPF0060 MEMBRANE PROTEIN YNFA"/>
    <property type="match status" value="1"/>
</dbReference>
<dbReference type="Pfam" id="PF02694">
    <property type="entry name" value="UPF0060"/>
    <property type="match status" value="1"/>
</dbReference>
<dbReference type="SUPFAM" id="SSF103481">
    <property type="entry name" value="Multidrug resistance efflux transporter EmrE"/>
    <property type="match status" value="1"/>
</dbReference>
<organism>
    <name type="scientific">Staphylococcus aureus (strain NCTC 8325 / PS 47)</name>
    <dbReference type="NCBI Taxonomy" id="93061"/>
    <lineage>
        <taxon>Bacteria</taxon>
        <taxon>Bacillati</taxon>
        <taxon>Bacillota</taxon>
        <taxon>Bacilli</taxon>
        <taxon>Bacillales</taxon>
        <taxon>Staphylococcaceae</taxon>
        <taxon>Staphylococcus</taxon>
    </lineage>
</organism>
<protein>
    <recommendedName>
        <fullName evidence="1">UPF0060 membrane protein SAOUHSC_02615</fullName>
    </recommendedName>
</protein>
<reference key="1">
    <citation type="book" date="2006" name="Gram positive pathogens, 2nd edition">
        <title>The Staphylococcus aureus NCTC 8325 genome.</title>
        <editorList>
            <person name="Fischetti V."/>
            <person name="Novick R."/>
            <person name="Ferretti J."/>
            <person name="Portnoy D."/>
            <person name="Rood J."/>
        </editorList>
        <authorList>
            <person name="Gillaspy A.F."/>
            <person name="Worrell V."/>
            <person name="Orvis J."/>
            <person name="Roe B.A."/>
            <person name="Dyer D.W."/>
            <person name="Iandolo J.J."/>
        </authorList>
    </citation>
    <scope>NUCLEOTIDE SEQUENCE [LARGE SCALE GENOMIC DNA]</scope>
    <source>
        <strain>NCTC 8325 / PS 47</strain>
    </source>
</reference>
<evidence type="ECO:0000255" key="1">
    <source>
        <dbReference type="HAMAP-Rule" id="MF_00010"/>
    </source>
</evidence>
<sequence>MLYPIFIFILAGLCEIGGGYLIWLWLREGQSSLVGLIGGAILMLYGVIATFQSFPSFGRVYAAYGGVFIIMSLIFAMVVDKQMPDKYDVIGAIICIVGVLVMLLPSRA</sequence>
<feature type="chain" id="PRO_0000282270" description="UPF0060 membrane protein SAOUHSC_02615">
    <location>
        <begin position="1"/>
        <end position="108"/>
    </location>
</feature>
<feature type="transmembrane region" description="Helical" evidence="1">
    <location>
        <begin position="5"/>
        <end position="25"/>
    </location>
</feature>
<feature type="transmembrane region" description="Helical" evidence="1">
    <location>
        <begin position="31"/>
        <end position="51"/>
    </location>
</feature>
<feature type="transmembrane region" description="Helical" evidence="1">
    <location>
        <begin position="60"/>
        <end position="80"/>
    </location>
</feature>
<feature type="transmembrane region" description="Helical" evidence="1">
    <location>
        <begin position="86"/>
        <end position="106"/>
    </location>
</feature>
<keyword id="KW-1003">Cell membrane</keyword>
<keyword id="KW-0472">Membrane</keyword>
<keyword id="KW-1185">Reference proteome</keyword>
<keyword id="KW-0812">Transmembrane</keyword>
<keyword id="KW-1133">Transmembrane helix</keyword>
<name>Y2615_STAA8</name>
<comment type="subcellular location">
    <subcellularLocation>
        <location evidence="1">Cell membrane</location>
        <topology evidence="1">Multi-pass membrane protein</topology>
    </subcellularLocation>
</comment>
<comment type="similarity">
    <text evidence="1">Belongs to the UPF0060 family.</text>
</comment>
<proteinExistence type="inferred from homology"/>
<gene>
    <name type="ordered locus">SAOUHSC_02615</name>
</gene>